<accession>Q9PF41</accession>
<sequence>MYRVLRLLPLPLSVAISLSALADEKPPNWGLCPATLPLQGFEQAPGMDKHVVQSRPQLPTNIEGDTLTGTARTPLYQGNVLMARGDQFLGADSVRMDTETDSYVAEGHVRYQDSSILVVADRAEGNQDTDVHKISNIQYQLIGRRGNGVAKSVDIHGQVGQTHEATYTTCDPSQAIWRLRAPEIDVDNVEGFGVARHAVFEVGQWPVLYLPWFKFPIDSRRQTGLLYPQLGYSGRNGFDYAQPIYLNLAPNYDATLYPRYMQKRGFMIDTEFRYLYDDGKWQTRAAFIPNDQLRDKDRGRFSFNGYHNIDNHWQARASLAWVSDTRYMEDFSSRLVGMSSLSSLQSTVGVYGTGETWTAGLMADRWQLTDYSLDESALAYNRQPRLFFNWDKPVFDFLEFGLYSEVVRFKHDDAYLVALQNDGNYLRTGEVIRYYGGTRLDVKPYLLLPFTGASWYVTPTFGWRYSSYYLDSGIAEQLNGNRTPVRSLPIISLDSGVYLDRDTSVFGRNYLNTLEPRFYYLYVPYRNQSDLPLFDTRAFTFSWGQLFRDSRYTGPDRQNDANQLTLAVTSRWLDQNTGKEDLALSVGQILYFKDSLVTLNDSEERIQQGKSVWVSDVAYNVNDRWTLNATYQWNPNFRRDDLASIRARYLIGSDGIINLAYRYRRNTLDGTTQLKQTDFSFLYPINPRWSAIGRYYYSLLDKKPLEIISGLQWDSCCLAVRTVLRRYMRDRTGNMDNSIQLEFVFKGLSSVGQDTDRVLRRAILGYYRDDLYLVPPSNTTTDPDAYDPNKIP</sequence>
<comment type="function">
    <text evidence="1">Together with LptE, is involved in the assembly of lipopolysaccharide (LPS) at the surface of the outer membrane.</text>
</comment>
<comment type="subunit">
    <text evidence="1">Component of the lipopolysaccharide transport and assembly complex. Interacts with LptE and LptA.</text>
</comment>
<comment type="subcellular location">
    <subcellularLocation>
        <location evidence="1">Cell outer membrane</location>
    </subcellularLocation>
</comment>
<comment type="similarity">
    <text evidence="1">Belongs to the LptD family.</text>
</comment>
<name>LPTD_XYLFA</name>
<organism>
    <name type="scientific">Xylella fastidiosa (strain 9a5c)</name>
    <dbReference type="NCBI Taxonomy" id="160492"/>
    <lineage>
        <taxon>Bacteria</taxon>
        <taxon>Pseudomonadati</taxon>
        <taxon>Pseudomonadota</taxon>
        <taxon>Gammaproteobacteria</taxon>
        <taxon>Lysobacterales</taxon>
        <taxon>Lysobacteraceae</taxon>
        <taxon>Xylella</taxon>
    </lineage>
</organism>
<keyword id="KW-0998">Cell outer membrane</keyword>
<keyword id="KW-0472">Membrane</keyword>
<keyword id="KW-0732">Signal</keyword>
<proteinExistence type="inferred from homology"/>
<evidence type="ECO:0000255" key="1">
    <source>
        <dbReference type="HAMAP-Rule" id="MF_01411"/>
    </source>
</evidence>
<protein>
    <recommendedName>
        <fullName evidence="1">LPS-assembly protein LptD</fullName>
    </recommendedName>
</protein>
<feature type="signal peptide" evidence="1">
    <location>
        <begin position="1"/>
        <end position="22"/>
    </location>
</feature>
<feature type="chain" id="PRO_0000020299" description="LPS-assembly protein LptD">
    <location>
        <begin position="23"/>
        <end position="792"/>
    </location>
</feature>
<reference key="1">
    <citation type="journal article" date="2000" name="Nature">
        <title>The genome sequence of the plant pathogen Xylella fastidiosa.</title>
        <authorList>
            <person name="Simpson A.J.G."/>
            <person name="Reinach F.C."/>
            <person name="Arruda P."/>
            <person name="Abreu F.A."/>
            <person name="Acencio M."/>
            <person name="Alvarenga R."/>
            <person name="Alves L.M.C."/>
            <person name="Araya J.E."/>
            <person name="Baia G.S."/>
            <person name="Baptista C.S."/>
            <person name="Barros M.H."/>
            <person name="Bonaccorsi E.D."/>
            <person name="Bordin S."/>
            <person name="Bove J.M."/>
            <person name="Briones M.R.S."/>
            <person name="Bueno M.R.P."/>
            <person name="Camargo A.A."/>
            <person name="Camargo L.E.A."/>
            <person name="Carraro D.M."/>
            <person name="Carrer H."/>
            <person name="Colauto N.B."/>
            <person name="Colombo C."/>
            <person name="Costa F.F."/>
            <person name="Costa M.C.R."/>
            <person name="Costa-Neto C.M."/>
            <person name="Coutinho L.L."/>
            <person name="Cristofani M."/>
            <person name="Dias-Neto E."/>
            <person name="Docena C."/>
            <person name="El-Dorry H."/>
            <person name="Facincani A.P."/>
            <person name="Ferreira A.J.S."/>
            <person name="Ferreira V.C.A."/>
            <person name="Ferro J.A."/>
            <person name="Fraga J.S."/>
            <person name="Franca S.C."/>
            <person name="Franco M.C."/>
            <person name="Frohme M."/>
            <person name="Furlan L.R."/>
            <person name="Garnier M."/>
            <person name="Goldman G.H."/>
            <person name="Goldman M.H.S."/>
            <person name="Gomes S.L."/>
            <person name="Gruber A."/>
            <person name="Ho P.L."/>
            <person name="Hoheisel J.D."/>
            <person name="Junqueira M.L."/>
            <person name="Kemper E.L."/>
            <person name="Kitajima J.P."/>
            <person name="Krieger J.E."/>
            <person name="Kuramae E.E."/>
            <person name="Laigret F."/>
            <person name="Lambais M.R."/>
            <person name="Leite L.C.C."/>
            <person name="Lemos E.G.M."/>
            <person name="Lemos M.V.F."/>
            <person name="Lopes S.A."/>
            <person name="Lopes C.R."/>
            <person name="Machado J.A."/>
            <person name="Machado M.A."/>
            <person name="Madeira A.M.B.N."/>
            <person name="Madeira H.M.F."/>
            <person name="Marino C.L."/>
            <person name="Marques M.V."/>
            <person name="Martins E.A.L."/>
            <person name="Martins E.M.F."/>
            <person name="Matsukuma A.Y."/>
            <person name="Menck C.F.M."/>
            <person name="Miracca E.C."/>
            <person name="Miyaki C.Y."/>
            <person name="Monteiro-Vitorello C.B."/>
            <person name="Moon D.H."/>
            <person name="Nagai M.A."/>
            <person name="Nascimento A.L.T.O."/>
            <person name="Netto L.E.S."/>
            <person name="Nhani A. Jr."/>
            <person name="Nobrega F.G."/>
            <person name="Nunes L.R."/>
            <person name="Oliveira M.A."/>
            <person name="de Oliveira M.C."/>
            <person name="de Oliveira R.C."/>
            <person name="Palmieri D.A."/>
            <person name="Paris A."/>
            <person name="Peixoto B.R."/>
            <person name="Pereira G.A.G."/>
            <person name="Pereira H.A. Jr."/>
            <person name="Pesquero J.B."/>
            <person name="Quaggio R.B."/>
            <person name="Roberto P.G."/>
            <person name="Rodrigues V."/>
            <person name="de Rosa A.J.M."/>
            <person name="de Rosa V.E. Jr."/>
            <person name="de Sa R.G."/>
            <person name="Santelli R.V."/>
            <person name="Sawasaki H.E."/>
            <person name="da Silva A.C.R."/>
            <person name="da Silva A.M."/>
            <person name="da Silva F.R."/>
            <person name="Silva W.A. Jr."/>
            <person name="da Silveira J.F."/>
            <person name="Silvestri M.L.Z."/>
            <person name="Siqueira W.J."/>
            <person name="de Souza A.A."/>
            <person name="de Souza A.P."/>
            <person name="Terenzi M.F."/>
            <person name="Truffi D."/>
            <person name="Tsai S.M."/>
            <person name="Tsuhako M.H."/>
            <person name="Vallada H."/>
            <person name="Van Sluys M.A."/>
            <person name="Verjovski-Almeida S."/>
            <person name="Vettore A.L."/>
            <person name="Zago M.A."/>
            <person name="Zatz M."/>
            <person name="Meidanis J."/>
            <person name="Setubal J.C."/>
        </authorList>
    </citation>
    <scope>NUCLEOTIDE SEQUENCE [LARGE SCALE GENOMIC DNA]</scope>
    <source>
        <strain>9a5c</strain>
    </source>
</reference>
<gene>
    <name evidence="1" type="primary">lptD</name>
    <name type="synonym">imp</name>
    <name type="synonym">ostA</name>
    <name type="ordered locus">XF_0837</name>
</gene>
<dbReference type="EMBL" id="AE003849">
    <property type="protein sequence ID" value="AAF83647.1"/>
    <property type="molecule type" value="Genomic_DNA"/>
</dbReference>
<dbReference type="PIR" id="B82756">
    <property type="entry name" value="B82756"/>
</dbReference>
<dbReference type="RefSeq" id="WP_010893357.1">
    <property type="nucleotide sequence ID" value="NC_002488.3"/>
</dbReference>
<dbReference type="SMR" id="Q9PF41"/>
<dbReference type="STRING" id="160492.XF_0837"/>
<dbReference type="KEGG" id="xfa:XF_0837"/>
<dbReference type="eggNOG" id="COG1452">
    <property type="taxonomic scope" value="Bacteria"/>
</dbReference>
<dbReference type="HOGENOM" id="CLU_009039_0_0_6"/>
<dbReference type="Proteomes" id="UP000000812">
    <property type="component" value="Chromosome"/>
</dbReference>
<dbReference type="GO" id="GO:0009279">
    <property type="term" value="C:cell outer membrane"/>
    <property type="evidence" value="ECO:0007669"/>
    <property type="project" value="UniProtKB-SubCell"/>
</dbReference>
<dbReference type="GO" id="GO:1990351">
    <property type="term" value="C:transporter complex"/>
    <property type="evidence" value="ECO:0007669"/>
    <property type="project" value="TreeGrafter"/>
</dbReference>
<dbReference type="GO" id="GO:0043165">
    <property type="term" value="P:Gram-negative-bacterium-type cell outer membrane assembly"/>
    <property type="evidence" value="ECO:0007669"/>
    <property type="project" value="UniProtKB-UniRule"/>
</dbReference>
<dbReference type="GO" id="GO:0015920">
    <property type="term" value="P:lipopolysaccharide transport"/>
    <property type="evidence" value="ECO:0007669"/>
    <property type="project" value="InterPro"/>
</dbReference>
<dbReference type="HAMAP" id="MF_01411">
    <property type="entry name" value="LPS_assembly_LptD"/>
    <property type="match status" value="1"/>
</dbReference>
<dbReference type="InterPro" id="IPR020889">
    <property type="entry name" value="LipoPS_assembly_LptD"/>
</dbReference>
<dbReference type="InterPro" id="IPR050218">
    <property type="entry name" value="LptD"/>
</dbReference>
<dbReference type="InterPro" id="IPR007543">
    <property type="entry name" value="LptD_C"/>
</dbReference>
<dbReference type="NCBIfam" id="NF003358">
    <property type="entry name" value="PRK04423.1"/>
    <property type="match status" value="1"/>
</dbReference>
<dbReference type="PANTHER" id="PTHR30189">
    <property type="entry name" value="LPS-ASSEMBLY PROTEIN"/>
    <property type="match status" value="1"/>
</dbReference>
<dbReference type="PANTHER" id="PTHR30189:SF1">
    <property type="entry name" value="LPS-ASSEMBLY PROTEIN LPTD"/>
    <property type="match status" value="1"/>
</dbReference>
<dbReference type="Pfam" id="PF04453">
    <property type="entry name" value="LptD"/>
    <property type="match status" value="1"/>
</dbReference>